<accession>Q9NYN1</accession>
<accession>B2RC29</accession>
<accession>B4DJW2</accession>
<accession>B4DU82</accession>
<gene>
    <name type="primary">RASL12</name>
    <name type="synonym">RIS</name>
</gene>
<reference key="1">
    <citation type="journal article" date="2002" name="Mol. Vis.">
        <title>Expressed sequence tag analysis of adult human iris for the NEIBank project: steroid-response factors and similarities with retinal pigment epithelium.</title>
        <authorList>
            <person name="Wistow G."/>
            <person name="Bernstein S.L."/>
            <person name="Ray S."/>
            <person name="Wyatt M.K."/>
            <person name="Behal A."/>
            <person name="Touchman J.W."/>
            <person name="Bouffard G."/>
            <person name="Smith D."/>
            <person name="Peterson K."/>
        </authorList>
    </citation>
    <scope>NUCLEOTIDE SEQUENCE [MRNA] (ISOFORM 1)</scope>
    <source>
        <tissue>Iris</tissue>
    </source>
</reference>
<reference key="2">
    <citation type="journal article" date="2004" name="Nat. Genet.">
        <title>Complete sequencing and characterization of 21,243 full-length human cDNAs.</title>
        <authorList>
            <person name="Ota T."/>
            <person name="Suzuki Y."/>
            <person name="Nishikawa T."/>
            <person name="Otsuki T."/>
            <person name="Sugiyama T."/>
            <person name="Irie R."/>
            <person name="Wakamatsu A."/>
            <person name="Hayashi K."/>
            <person name="Sato H."/>
            <person name="Nagai K."/>
            <person name="Kimura K."/>
            <person name="Makita H."/>
            <person name="Sekine M."/>
            <person name="Obayashi M."/>
            <person name="Nishi T."/>
            <person name="Shibahara T."/>
            <person name="Tanaka T."/>
            <person name="Ishii S."/>
            <person name="Yamamoto J."/>
            <person name="Saito K."/>
            <person name="Kawai Y."/>
            <person name="Isono Y."/>
            <person name="Nakamura Y."/>
            <person name="Nagahari K."/>
            <person name="Murakami K."/>
            <person name="Yasuda T."/>
            <person name="Iwayanagi T."/>
            <person name="Wagatsuma M."/>
            <person name="Shiratori A."/>
            <person name="Sudo H."/>
            <person name="Hosoiri T."/>
            <person name="Kaku Y."/>
            <person name="Kodaira H."/>
            <person name="Kondo H."/>
            <person name="Sugawara M."/>
            <person name="Takahashi M."/>
            <person name="Kanda K."/>
            <person name="Yokoi T."/>
            <person name="Furuya T."/>
            <person name="Kikkawa E."/>
            <person name="Omura Y."/>
            <person name="Abe K."/>
            <person name="Kamihara K."/>
            <person name="Katsuta N."/>
            <person name="Sato K."/>
            <person name="Tanikawa M."/>
            <person name="Yamazaki M."/>
            <person name="Ninomiya K."/>
            <person name="Ishibashi T."/>
            <person name="Yamashita H."/>
            <person name="Murakawa K."/>
            <person name="Fujimori K."/>
            <person name="Tanai H."/>
            <person name="Kimata M."/>
            <person name="Watanabe M."/>
            <person name="Hiraoka S."/>
            <person name="Chiba Y."/>
            <person name="Ishida S."/>
            <person name="Ono Y."/>
            <person name="Takiguchi S."/>
            <person name="Watanabe S."/>
            <person name="Yosida M."/>
            <person name="Hotuta T."/>
            <person name="Kusano J."/>
            <person name="Kanehori K."/>
            <person name="Takahashi-Fujii A."/>
            <person name="Hara H."/>
            <person name="Tanase T.-O."/>
            <person name="Nomura Y."/>
            <person name="Togiya S."/>
            <person name="Komai F."/>
            <person name="Hara R."/>
            <person name="Takeuchi K."/>
            <person name="Arita M."/>
            <person name="Imose N."/>
            <person name="Musashino K."/>
            <person name="Yuuki H."/>
            <person name="Oshima A."/>
            <person name="Sasaki N."/>
            <person name="Aotsuka S."/>
            <person name="Yoshikawa Y."/>
            <person name="Matsunawa H."/>
            <person name="Ichihara T."/>
            <person name="Shiohata N."/>
            <person name="Sano S."/>
            <person name="Moriya S."/>
            <person name="Momiyama H."/>
            <person name="Satoh N."/>
            <person name="Takami S."/>
            <person name="Terashima Y."/>
            <person name="Suzuki O."/>
            <person name="Nakagawa S."/>
            <person name="Senoh A."/>
            <person name="Mizoguchi H."/>
            <person name="Goto Y."/>
            <person name="Shimizu F."/>
            <person name="Wakebe H."/>
            <person name="Hishigaki H."/>
            <person name="Watanabe T."/>
            <person name="Sugiyama A."/>
            <person name="Takemoto M."/>
            <person name="Kawakami B."/>
            <person name="Yamazaki M."/>
            <person name="Watanabe K."/>
            <person name="Kumagai A."/>
            <person name="Itakura S."/>
            <person name="Fukuzumi Y."/>
            <person name="Fujimori Y."/>
            <person name="Komiyama M."/>
            <person name="Tashiro H."/>
            <person name="Tanigami A."/>
            <person name="Fujiwara T."/>
            <person name="Ono T."/>
            <person name="Yamada K."/>
            <person name="Fujii Y."/>
            <person name="Ozaki K."/>
            <person name="Hirao M."/>
            <person name="Ohmori Y."/>
            <person name="Kawabata A."/>
            <person name="Hikiji T."/>
            <person name="Kobatake N."/>
            <person name="Inagaki H."/>
            <person name="Ikema Y."/>
            <person name="Okamoto S."/>
            <person name="Okitani R."/>
            <person name="Kawakami T."/>
            <person name="Noguchi S."/>
            <person name="Itoh T."/>
            <person name="Shigeta K."/>
            <person name="Senba T."/>
            <person name="Matsumura K."/>
            <person name="Nakajima Y."/>
            <person name="Mizuno T."/>
            <person name="Morinaga M."/>
            <person name="Sasaki M."/>
            <person name="Togashi T."/>
            <person name="Oyama M."/>
            <person name="Hata H."/>
            <person name="Watanabe M."/>
            <person name="Komatsu T."/>
            <person name="Mizushima-Sugano J."/>
            <person name="Satoh T."/>
            <person name="Shirai Y."/>
            <person name="Takahashi Y."/>
            <person name="Nakagawa K."/>
            <person name="Okumura K."/>
            <person name="Nagase T."/>
            <person name="Nomura N."/>
            <person name="Kikuchi H."/>
            <person name="Masuho Y."/>
            <person name="Yamashita R."/>
            <person name="Nakai K."/>
            <person name="Yada T."/>
            <person name="Nakamura Y."/>
            <person name="Ohara O."/>
            <person name="Isogai T."/>
            <person name="Sugano S."/>
        </authorList>
    </citation>
    <scope>NUCLEOTIDE SEQUENCE [LARGE SCALE MRNA] (ISOFORMS 1; 2 AND 3)</scope>
    <source>
        <tissue>Brain</tissue>
        <tissue>Prostate</tissue>
        <tissue>Thalamus</tissue>
    </source>
</reference>
<reference key="3">
    <citation type="journal article" date="2006" name="Nature">
        <title>Analysis of the DNA sequence and duplication history of human chromosome 15.</title>
        <authorList>
            <person name="Zody M.C."/>
            <person name="Garber M."/>
            <person name="Sharpe T."/>
            <person name="Young S.K."/>
            <person name="Rowen L."/>
            <person name="O'Neill K."/>
            <person name="Whittaker C.A."/>
            <person name="Kamal M."/>
            <person name="Chang J.L."/>
            <person name="Cuomo C.A."/>
            <person name="Dewar K."/>
            <person name="FitzGerald M.G."/>
            <person name="Kodira C.D."/>
            <person name="Madan A."/>
            <person name="Qin S."/>
            <person name="Yang X."/>
            <person name="Abbasi N."/>
            <person name="Abouelleil A."/>
            <person name="Arachchi H.M."/>
            <person name="Baradarani L."/>
            <person name="Birditt B."/>
            <person name="Bloom S."/>
            <person name="Bloom T."/>
            <person name="Borowsky M.L."/>
            <person name="Burke J."/>
            <person name="Butler J."/>
            <person name="Cook A."/>
            <person name="DeArellano K."/>
            <person name="DeCaprio D."/>
            <person name="Dorris L. III"/>
            <person name="Dors M."/>
            <person name="Eichler E.E."/>
            <person name="Engels R."/>
            <person name="Fahey J."/>
            <person name="Fleetwood P."/>
            <person name="Friedman C."/>
            <person name="Gearin G."/>
            <person name="Hall J.L."/>
            <person name="Hensley G."/>
            <person name="Johnson E."/>
            <person name="Jones C."/>
            <person name="Kamat A."/>
            <person name="Kaur A."/>
            <person name="Locke D.P."/>
            <person name="Madan A."/>
            <person name="Munson G."/>
            <person name="Jaffe D.B."/>
            <person name="Lui A."/>
            <person name="Macdonald P."/>
            <person name="Mauceli E."/>
            <person name="Naylor J.W."/>
            <person name="Nesbitt R."/>
            <person name="Nicol R."/>
            <person name="O'Leary S.B."/>
            <person name="Ratcliffe A."/>
            <person name="Rounsley S."/>
            <person name="She X."/>
            <person name="Sneddon K.M.B."/>
            <person name="Stewart S."/>
            <person name="Sougnez C."/>
            <person name="Stone S.M."/>
            <person name="Topham K."/>
            <person name="Vincent D."/>
            <person name="Wang S."/>
            <person name="Zimmer A.R."/>
            <person name="Birren B.W."/>
            <person name="Hood L."/>
            <person name="Lander E.S."/>
            <person name="Nusbaum C."/>
        </authorList>
    </citation>
    <scope>NUCLEOTIDE SEQUENCE [LARGE SCALE GENOMIC DNA]</scope>
</reference>
<reference key="4">
    <citation type="submission" date="2005-07" db="EMBL/GenBank/DDBJ databases">
        <authorList>
            <person name="Mural R.J."/>
            <person name="Istrail S."/>
            <person name="Sutton G.G."/>
            <person name="Florea L."/>
            <person name="Halpern A.L."/>
            <person name="Mobarry C.M."/>
            <person name="Lippert R."/>
            <person name="Walenz B."/>
            <person name="Shatkay H."/>
            <person name="Dew I."/>
            <person name="Miller J.R."/>
            <person name="Flanigan M.J."/>
            <person name="Edwards N.J."/>
            <person name="Bolanos R."/>
            <person name="Fasulo D."/>
            <person name="Halldorsson B.V."/>
            <person name="Hannenhalli S."/>
            <person name="Turner R."/>
            <person name="Yooseph S."/>
            <person name="Lu F."/>
            <person name="Nusskern D.R."/>
            <person name="Shue B.C."/>
            <person name="Zheng X.H."/>
            <person name="Zhong F."/>
            <person name="Delcher A.L."/>
            <person name="Huson D.H."/>
            <person name="Kravitz S.A."/>
            <person name="Mouchard L."/>
            <person name="Reinert K."/>
            <person name="Remington K.A."/>
            <person name="Clark A.G."/>
            <person name="Waterman M.S."/>
            <person name="Eichler E.E."/>
            <person name="Adams M.D."/>
            <person name="Hunkapiller M.W."/>
            <person name="Myers E.W."/>
            <person name="Venter J.C."/>
        </authorList>
    </citation>
    <scope>NUCLEOTIDE SEQUENCE [LARGE SCALE GENOMIC DNA]</scope>
</reference>
<reference key="5">
    <citation type="journal article" date="2004" name="Genome Res.">
        <title>The status, quality, and expansion of the NIH full-length cDNA project: the Mammalian Gene Collection (MGC).</title>
        <authorList>
            <consortium name="The MGC Project Team"/>
        </authorList>
    </citation>
    <scope>NUCLEOTIDE SEQUENCE [LARGE SCALE MRNA] (ISOFORM 1)</scope>
    <source>
        <tissue>Ovary</tissue>
    </source>
</reference>
<reference key="6">
    <citation type="submission" date="2009-02" db="PDB data bank">
        <title>Crystal structure of human ras-like, family 12 protein in complex with GDP.</title>
        <authorList>
            <consortium name="Structural genomics consortium (SGC)"/>
        </authorList>
    </citation>
    <scope>X-RAY CRYSTALLOGRAPHY (1.85 ANGSTROMS) OF 18-186 IN COMPLEX WITH GDP</scope>
</reference>
<protein>
    <recommendedName>
        <fullName>Ras-like protein family member 12</fullName>
        <ecNumber evidence="2">3.6.5.2</ecNumber>
    </recommendedName>
    <alternativeName>
        <fullName>Ras-like protein Ris</fullName>
    </alternativeName>
</protein>
<organism>
    <name type="scientific">Homo sapiens</name>
    <name type="common">Human</name>
    <dbReference type="NCBI Taxonomy" id="9606"/>
    <lineage>
        <taxon>Eukaryota</taxon>
        <taxon>Metazoa</taxon>
        <taxon>Chordata</taxon>
        <taxon>Craniata</taxon>
        <taxon>Vertebrata</taxon>
        <taxon>Euteleostomi</taxon>
        <taxon>Mammalia</taxon>
        <taxon>Eutheria</taxon>
        <taxon>Euarchontoglires</taxon>
        <taxon>Primates</taxon>
        <taxon>Haplorrhini</taxon>
        <taxon>Catarrhini</taxon>
        <taxon>Hominidae</taxon>
        <taxon>Homo</taxon>
    </lineage>
</organism>
<sequence>MSSVFGKPRAGSGPQSAPLEVNLAILGRRGAGKSALTVKFLTKRFISEYDPNLEDTYSSEETVDHQPVHLRVMDTADLDTPRNCERYLNWAHAFLVVYSVDSRQSFDSSSSYLELLALHAKETQRSIPALLLGNKLDMAQYRQVTKAEGVALAGRFGCLFFEVSACLDFEHVQHVFHEAVREARRELEKSPLTRPLFISEERALPHQAPLTARHGLASCTFNTLSTINLKEMPTVAQAKLVTVKSSRAQSKRKAPTLTLLKGFKIF</sequence>
<dbReference type="EC" id="3.6.5.2" evidence="2"/>
<dbReference type="EMBL" id="AF233588">
    <property type="protein sequence ID" value="AAF60286.1"/>
    <property type="molecule type" value="mRNA"/>
</dbReference>
<dbReference type="EMBL" id="AK296261">
    <property type="protein sequence ID" value="BAG58974.1"/>
    <property type="molecule type" value="mRNA"/>
</dbReference>
<dbReference type="EMBL" id="AK300536">
    <property type="protein sequence ID" value="BAG62244.1"/>
    <property type="molecule type" value="mRNA"/>
</dbReference>
<dbReference type="EMBL" id="AK314914">
    <property type="protein sequence ID" value="BAG37426.1"/>
    <property type="molecule type" value="mRNA"/>
</dbReference>
<dbReference type="EMBL" id="AC013553">
    <property type="status" value="NOT_ANNOTATED_CDS"/>
    <property type="molecule type" value="Genomic_DNA"/>
</dbReference>
<dbReference type="EMBL" id="CH471082">
    <property type="protein sequence ID" value="EAW77709.1"/>
    <property type="molecule type" value="Genomic_DNA"/>
</dbReference>
<dbReference type="EMBL" id="BC053734">
    <property type="protein sequence ID" value="AAH53734.1"/>
    <property type="molecule type" value="mRNA"/>
</dbReference>
<dbReference type="CCDS" id="CCDS10200.1">
    <molecule id="Q9NYN1-1"/>
</dbReference>
<dbReference type="CCDS" id="CCDS76769.1">
    <molecule id="Q9NYN1-3"/>
</dbReference>
<dbReference type="CCDS" id="CCDS92017.1">
    <molecule id="Q9NYN1-2"/>
</dbReference>
<dbReference type="RefSeq" id="NP_001294859.1">
    <molecule id="Q9NYN1-3"/>
    <property type="nucleotide sequence ID" value="NM_001307930.2"/>
</dbReference>
<dbReference type="RefSeq" id="NP_001366358.1">
    <molecule id="Q9NYN1-2"/>
    <property type="nucleotide sequence ID" value="NM_001379429.1"/>
</dbReference>
<dbReference type="RefSeq" id="NP_057647.1">
    <molecule id="Q9NYN1-1"/>
    <property type="nucleotide sequence ID" value="NM_016563.4"/>
</dbReference>
<dbReference type="PDB" id="3C5C">
    <property type="method" value="X-ray"/>
    <property type="resolution" value="1.85 A"/>
    <property type="chains" value="A/B/C/D=18-186"/>
</dbReference>
<dbReference type="PDBsum" id="3C5C"/>
<dbReference type="SMR" id="Q9NYN1"/>
<dbReference type="BioGRID" id="119437">
    <property type="interactions" value="14"/>
</dbReference>
<dbReference type="FunCoup" id="Q9NYN1">
    <property type="interactions" value="831"/>
</dbReference>
<dbReference type="IntAct" id="Q9NYN1">
    <property type="interactions" value="4"/>
</dbReference>
<dbReference type="STRING" id="9606.ENSP00000220062"/>
<dbReference type="iPTMnet" id="Q9NYN1"/>
<dbReference type="PhosphoSitePlus" id="Q9NYN1"/>
<dbReference type="BioMuta" id="RASL12"/>
<dbReference type="DMDM" id="74734715"/>
<dbReference type="MassIVE" id="Q9NYN1"/>
<dbReference type="PaxDb" id="9606-ENSP00000220062"/>
<dbReference type="PeptideAtlas" id="Q9NYN1"/>
<dbReference type="ProteomicsDB" id="4411"/>
<dbReference type="ProteomicsDB" id="5160"/>
<dbReference type="ProteomicsDB" id="83255">
    <molecule id="Q9NYN1-1"/>
</dbReference>
<dbReference type="Antibodypedia" id="25905">
    <property type="antibodies" value="131 antibodies from 19 providers"/>
</dbReference>
<dbReference type="DNASU" id="51285"/>
<dbReference type="Ensembl" id="ENST00000220062.9">
    <molecule id="Q9NYN1-1"/>
    <property type="protein sequence ID" value="ENSP00000220062.4"/>
    <property type="gene ID" value="ENSG00000103710.11"/>
</dbReference>
<dbReference type="Ensembl" id="ENST00000421977.7">
    <molecule id="Q9NYN1-3"/>
    <property type="protein sequence ID" value="ENSP00000390028.3"/>
    <property type="gene ID" value="ENSG00000103710.11"/>
</dbReference>
<dbReference type="Ensembl" id="ENST00000434605.2">
    <molecule id="Q9NYN1-2"/>
    <property type="protein sequence ID" value="ENSP00000412787.2"/>
    <property type="gene ID" value="ENSG00000103710.11"/>
</dbReference>
<dbReference type="GeneID" id="51285"/>
<dbReference type="KEGG" id="hsa:51285"/>
<dbReference type="MANE-Select" id="ENST00000220062.9">
    <property type="protein sequence ID" value="ENSP00000220062.4"/>
    <property type="RefSeq nucleotide sequence ID" value="NM_016563.4"/>
    <property type="RefSeq protein sequence ID" value="NP_057647.1"/>
</dbReference>
<dbReference type="UCSC" id="uc002aoi.2">
    <molecule id="Q9NYN1-1"/>
    <property type="organism name" value="human"/>
</dbReference>
<dbReference type="AGR" id="HGNC:30289"/>
<dbReference type="CTD" id="51285"/>
<dbReference type="DisGeNET" id="51285"/>
<dbReference type="GeneCards" id="RASL12"/>
<dbReference type="HGNC" id="HGNC:30289">
    <property type="gene designation" value="RASL12"/>
</dbReference>
<dbReference type="HPA" id="ENSG00000103710">
    <property type="expression patterns" value="Low tissue specificity"/>
</dbReference>
<dbReference type="MalaCards" id="RASL12"/>
<dbReference type="neXtProt" id="NX_Q9NYN1"/>
<dbReference type="OpenTargets" id="ENSG00000103710"/>
<dbReference type="PharmGKB" id="PA134920029"/>
<dbReference type="VEuPathDB" id="HostDB:ENSG00000103710"/>
<dbReference type="eggNOG" id="KOG0395">
    <property type="taxonomic scope" value="Eukaryota"/>
</dbReference>
<dbReference type="GeneTree" id="ENSGT00940000160167"/>
<dbReference type="HOGENOM" id="CLU_041217_9_4_1"/>
<dbReference type="InParanoid" id="Q9NYN1"/>
<dbReference type="OMA" id="VYSIDNM"/>
<dbReference type="OrthoDB" id="18798at2759"/>
<dbReference type="PAN-GO" id="Q9NYN1">
    <property type="GO annotations" value="4 GO annotations based on evolutionary models"/>
</dbReference>
<dbReference type="PhylomeDB" id="Q9NYN1"/>
<dbReference type="TreeFam" id="TF318030"/>
<dbReference type="PathwayCommons" id="Q9NYN1"/>
<dbReference type="SignaLink" id="Q9NYN1"/>
<dbReference type="BioGRID-ORCS" id="51285">
    <property type="hits" value="13 hits in 1153 CRISPR screens"/>
</dbReference>
<dbReference type="ChiTaRS" id="RASL12">
    <property type="organism name" value="human"/>
</dbReference>
<dbReference type="EvolutionaryTrace" id="Q9NYN1"/>
<dbReference type="GenomeRNAi" id="51285"/>
<dbReference type="Pharos" id="Q9NYN1">
    <property type="development level" value="Tbio"/>
</dbReference>
<dbReference type="PRO" id="PR:Q9NYN1"/>
<dbReference type="Proteomes" id="UP000005640">
    <property type="component" value="Chromosome 15"/>
</dbReference>
<dbReference type="RNAct" id="Q9NYN1">
    <property type="molecule type" value="protein"/>
</dbReference>
<dbReference type="Bgee" id="ENSG00000103710">
    <property type="expression patterns" value="Expressed in popliteal artery and 172 other cell types or tissues"/>
</dbReference>
<dbReference type="ExpressionAtlas" id="Q9NYN1">
    <property type="expression patterns" value="baseline and differential"/>
</dbReference>
<dbReference type="GO" id="GO:0005886">
    <property type="term" value="C:plasma membrane"/>
    <property type="evidence" value="ECO:0000318"/>
    <property type="project" value="GO_Central"/>
</dbReference>
<dbReference type="GO" id="GO:0003925">
    <property type="term" value="F:G protein activity"/>
    <property type="evidence" value="ECO:0007669"/>
    <property type="project" value="UniProtKB-EC"/>
</dbReference>
<dbReference type="GO" id="GO:0019003">
    <property type="term" value="F:GDP binding"/>
    <property type="evidence" value="ECO:0000318"/>
    <property type="project" value="GO_Central"/>
</dbReference>
<dbReference type="GO" id="GO:0005525">
    <property type="term" value="F:GTP binding"/>
    <property type="evidence" value="ECO:0000318"/>
    <property type="project" value="GO_Central"/>
</dbReference>
<dbReference type="GO" id="GO:0003924">
    <property type="term" value="F:GTPase activity"/>
    <property type="evidence" value="ECO:0000318"/>
    <property type="project" value="GO_Central"/>
</dbReference>
<dbReference type="CDD" id="cd04146">
    <property type="entry name" value="RERG_RasL11_like"/>
    <property type="match status" value="1"/>
</dbReference>
<dbReference type="FunFam" id="3.40.50.300:FF:001016">
    <property type="entry name" value="ras-like protein family member 12"/>
    <property type="match status" value="1"/>
</dbReference>
<dbReference type="Gene3D" id="3.40.50.300">
    <property type="entry name" value="P-loop containing nucleotide triphosphate hydrolases"/>
    <property type="match status" value="1"/>
</dbReference>
<dbReference type="InterPro" id="IPR027417">
    <property type="entry name" value="P-loop_NTPase"/>
</dbReference>
<dbReference type="InterPro" id="IPR051065">
    <property type="entry name" value="Ras-related_GTPase"/>
</dbReference>
<dbReference type="InterPro" id="IPR005225">
    <property type="entry name" value="Small_GTP-bd"/>
</dbReference>
<dbReference type="InterPro" id="IPR001806">
    <property type="entry name" value="Small_GTPase"/>
</dbReference>
<dbReference type="NCBIfam" id="TIGR00231">
    <property type="entry name" value="small_GTP"/>
    <property type="match status" value="1"/>
</dbReference>
<dbReference type="PANTHER" id="PTHR45704">
    <property type="entry name" value="RAS-LIKE FAMILY MEMBER 11"/>
    <property type="match status" value="1"/>
</dbReference>
<dbReference type="Pfam" id="PF00071">
    <property type="entry name" value="Ras"/>
    <property type="match status" value="1"/>
</dbReference>
<dbReference type="PRINTS" id="PR00449">
    <property type="entry name" value="RASTRNSFRMNG"/>
</dbReference>
<dbReference type="SMART" id="SM00175">
    <property type="entry name" value="RAB"/>
    <property type="match status" value="1"/>
</dbReference>
<dbReference type="SMART" id="SM00173">
    <property type="entry name" value="RAS"/>
    <property type="match status" value="1"/>
</dbReference>
<dbReference type="SMART" id="SM00174">
    <property type="entry name" value="RHO"/>
    <property type="match status" value="1"/>
</dbReference>
<dbReference type="SUPFAM" id="SSF52540">
    <property type="entry name" value="P-loop containing nucleoside triphosphate hydrolases"/>
    <property type="match status" value="1"/>
</dbReference>
<dbReference type="PROSITE" id="PS51421">
    <property type="entry name" value="RAS"/>
    <property type="match status" value="1"/>
</dbReference>
<keyword id="KW-0002">3D-structure</keyword>
<keyword id="KW-0025">Alternative splicing</keyword>
<keyword id="KW-0342">GTP-binding</keyword>
<keyword id="KW-0378">Hydrolase</keyword>
<keyword id="KW-0547">Nucleotide-binding</keyword>
<keyword id="KW-1267">Proteomics identification</keyword>
<keyword id="KW-1185">Reference proteome</keyword>
<evidence type="ECO:0000250" key="1"/>
<evidence type="ECO:0000250" key="2">
    <source>
        <dbReference type="UniProtKB" id="P01116"/>
    </source>
</evidence>
<evidence type="ECO:0000303" key="3">
    <source>
    </source>
</evidence>
<evidence type="ECO:0000305" key="4"/>
<evidence type="ECO:0007829" key="5">
    <source>
        <dbReference type="PDB" id="3C5C"/>
    </source>
</evidence>
<proteinExistence type="evidence at protein level"/>
<comment type="catalytic activity">
    <reaction evidence="2">
        <text>GTP + H2O = GDP + phosphate + H(+)</text>
        <dbReference type="Rhea" id="RHEA:19669"/>
        <dbReference type="ChEBI" id="CHEBI:15377"/>
        <dbReference type="ChEBI" id="CHEBI:15378"/>
        <dbReference type="ChEBI" id="CHEBI:37565"/>
        <dbReference type="ChEBI" id="CHEBI:43474"/>
        <dbReference type="ChEBI" id="CHEBI:58189"/>
        <dbReference type="EC" id="3.6.5.2"/>
    </reaction>
</comment>
<comment type="interaction">
    <interactant intactId="EBI-12917066">
        <id>Q9NYN1</id>
    </interactant>
    <interactant intactId="EBI-701903">
        <id>Q14192</id>
        <label>FHL2</label>
    </interactant>
    <organismsDiffer>false</organismsDiffer>
    <experiments>6</experiments>
</comment>
<comment type="interaction">
    <interactant intactId="EBI-12917066">
        <id>Q9NYN1</id>
    </interactant>
    <interactant intactId="EBI-741101">
        <id>Q13643</id>
        <label>FHL3</label>
    </interactant>
    <organismsDiffer>false</organismsDiffer>
    <experiments>3</experiments>
</comment>
<comment type="alternative products">
    <event type="alternative splicing"/>
    <isoform>
        <id>Q9NYN1-1</id>
        <name>1</name>
        <sequence type="displayed"/>
    </isoform>
    <isoform>
        <id>Q9NYN1-2</id>
        <name>2</name>
        <sequence type="described" ref="VSP_055845"/>
    </isoform>
    <isoform>
        <id>Q9NYN1-3</id>
        <name>3</name>
        <sequence type="described" ref="VSP_055846"/>
    </isoform>
</comment>
<comment type="similarity">
    <text evidence="4">Belongs to the small GTPase superfamily. Ras family.</text>
</comment>
<feature type="chain" id="PRO_0000333868" description="Ras-like protein family member 12">
    <location>
        <begin position="1"/>
        <end position="266"/>
    </location>
</feature>
<feature type="binding site">
    <location>
        <begin position="27"/>
        <end position="34"/>
    </location>
    <ligand>
        <name>GTP</name>
        <dbReference type="ChEBI" id="CHEBI:37565"/>
    </ligand>
</feature>
<feature type="binding site" evidence="1">
    <location>
        <begin position="74"/>
        <end position="78"/>
    </location>
    <ligand>
        <name>GTP</name>
        <dbReference type="ChEBI" id="CHEBI:37565"/>
    </ligand>
</feature>
<feature type="binding site">
    <location>
        <begin position="134"/>
        <end position="137"/>
    </location>
    <ligand>
        <name>GTP</name>
        <dbReference type="ChEBI" id="CHEBI:37565"/>
    </ligand>
</feature>
<feature type="splice variant" id="VSP_055845" description="In isoform 2." evidence="3">
    <original>MSSVFGKPRAGSGPQSAPLEVNLAILGRRGAGKS</original>
    <variation>MVIMGPELVGSWSDFKNEAADPR</variation>
    <location>
        <begin position="1"/>
        <end position="34"/>
    </location>
</feature>
<feature type="splice variant" id="VSP_055846" description="In isoform 3." evidence="3">
    <location>
        <begin position="35"/>
        <end position="53"/>
    </location>
</feature>
<feature type="strand" evidence="5">
    <location>
        <begin position="20"/>
        <end position="26"/>
    </location>
</feature>
<feature type="helix" evidence="5">
    <location>
        <begin position="33"/>
        <end position="42"/>
    </location>
</feature>
<feature type="strand" evidence="5">
    <location>
        <begin position="55"/>
        <end position="63"/>
    </location>
</feature>
<feature type="strand" evidence="5">
    <location>
        <begin position="66"/>
        <end position="74"/>
    </location>
</feature>
<feature type="helix" evidence="5">
    <location>
        <begin position="85"/>
        <end position="88"/>
    </location>
</feature>
<feature type="strand" evidence="5">
    <location>
        <begin position="92"/>
        <end position="99"/>
    </location>
</feature>
<feature type="helix" evidence="5">
    <location>
        <begin position="103"/>
        <end position="123"/>
    </location>
</feature>
<feature type="strand" evidence="5">
    <location>
        <begin position="129"/>
        <end position="134"/>
    </location>
</feature>
<feature type="helix" evidence="5">
    <location>
        <begin position="136"/>
        <end position="141"/>
    </location>
</feature>
<feature type="helix" evidence="5">
    <location>
        <begin position="146"/>
        <end position="156"/>
    </location>
</feature>
<feature type="strand" evidence="5">
    <location>
        <begin position="159"/>
        <end position="162"/>
    </location>
</feature>
<feature type="strand" evidence="5">
    <location>
        <begin position="165"/>
        <end position="167"/>
    </location>
</feature>
<feature type="helix" evidence="5">
    <location>
        <begin position="170"/>
        <end position="184"/>
    </location>
</feature>
<name>RASLC_HUMAN</name>